<evidence type="ECO:0000250" key="1"/>
<evidence type="ECO:0000255" key="2"/>
<evidence type="ECO:0000255" key="3">
    <source>
        <dbReference type="PROSITE-ProRule" id="PRU00166"/>
    </source>
</evidence>
<evidence type="ECO:0000256" key="4">
    <source>
        <dbReference type="SAM" id="MobiDB-lite"/>
    </source>
</evidence>
<evidence type="ECO:0000269" key="5">
    <source>
    </source>
</evidence>
<evidence type="ECO:0000305" key="6"/>
<gene>
    <name type="primary">Rassf10</name>
</gene>
<comment type="function">
    <text evidence="5">Plays an important role in regulating embryonic neurogenesis.</text>
</comment>
<comment type="subcellular location">
    <subcellularLocation>
        <location evidence="1">Cytoplasm</location>
        <location evidence="1">Cytosol</location>
    </subcellularLocation>
    <subcellularLocation>
        <location evidence="1">Cytoplasm</location>
        <location evidence="1">Cytoskeleton</location>
        <location evidence="1">Microtubule organizing center</location>
        <location evidence="1">Centrosome</location>
    </subcellularLocation>
    <subcellularLocation>
        <location evidence="1">Cytoplasm</location>
        <location evidence="1">Cytoskeleton</location>
        <location evidence="1">Spindle pole</location>
    </subcellularLocation>
</comment>
<comment type="tissue specificity">
    <text evidence="5">Expressed in neural progenitor cells (at protein level).</text>
</comment>
<comment type="developmental stage">
    <text evidence="5">Expression increases from 10 dpc to 12 dpc and gradually decreases after 15 dpc (at protein level).</text>
</comment>
<comment type="sequence caution" evidence="6">
    <conflict type="miscellaneous discrepancy">
        <sequence resource="EMBL-CDS" id="AAH28854"/>
    </conflict>
    <text>Aberrant splicing.</text>
</comment>
<comment type="sequence caution" evidence="6">
    <conflict type="frameshift">
        <sequence resource="EMBL-CDS" id="BAC27498"/>
    </conflict>
</comment>
<comment type="sequence caution" evidence="6">
    <conflict type="erroneous initiation">
        <sequence resource="EMBL-CDS" id="BAC32726"/>
    </conflict>
    <text>Extended N-terminus.</text>
</comment>
<organism>
    <name type="scientific">Mus musculus</name>
    <name type="common">Mouse</name>
    <dbReference type="NCBI Taxonomy" id="10090"/>
    <lineage>
        <taxon>Eukaryota</taxon>
        <taxon>Metazoa</taxon>
        <taxon>Chordata</taxon>
        <taxon>Craniata</taxon>
        <taxon>Vertebrata</taxon>
        <taxon>Euteleostomi</taxon>
        <taxon>Mammalia</taxon>
        <taxon>Eutheria</taxon>
        <taxon>Euarchontoglires</taxon>
        <taxon>Glires</taxon>
        <taxon>Rodentia</taxon>
        <taxon>Myomorpha</taxon>
        <taxon>Muroidea</taxon>
        <taxon>Muridae</taxon>
        <taxon>Murinae</taxon>
        <taxon>Mus</taxon>
        <taxon>Mus</taxon>
    </lineage>
</organism>
<feature type="chain" id="PRO_0000332285" description="Ras association domain-containing protein 10">
    <location>
        <begin position="1"/>
        <end position="508"/>
    </location>
</feature>
<feature type="domain" description="Ras-associating" evidence="3">
    <location>
        <begin position="1"/>
        <end position="133"/>
    </location>
</feature>
<feature type="region of interest" description="Disordered" evidence="4">
    <location>
        <begin position="51"/>
        <end position="81"/>
    </location>
</feature>
<feature type="region of interest" description="Disordered" evidence="4">
    <location>
        <begin position="186"/>
        <end position="221"/>
    </location>
</feature>
<feature type="region of interest" description="Disordered" evidence="4">
    <location>
        <begin position="473"/>
        <end position="508"/>
    </location>
</feature>
<feature type="coiled-coil region" evidence="2">
    <location>
        <begin position="235"/>
        <end position="266"/>
    </location>
</feature>
<feature type="coiled-coil region" evidence="2">
    <location>
        <begin position="319"/>
        <end position="358"/>
    </location>
</feature>
<feature type="compositionally biased region" description="Acidic residues" evidence="4">
    <location>
        <begin position="66"/>
        <end position="78"/>
    </location>
</feature>
<feature type="compositionally biased region" description="Low complexity" evidence="4">
    <location>
        <begin position="195"/>
        <end position="214"/>
    </location>
</feature>
<feature type="compositionally biased region" description="Polar residues" evidence="4">
    <location>
        <begin position="487"/>
        <end position="498"/>
    </location>
</feature>
<feature type="sequence conflict" description="In Ref. 1; BAC27498." evidence="6" ref="1">
    <location>
        <position position="487"/>
    </location>
</feature>
<keyword id="KW-0175">Coiled coil</keyword>
<keyword id="KW-0963">Cytoplasm</keyword>
<keyword id="KW-0206">Cytoskeleton</keyword>
<keyword id="KW-0524">Neurogenesis</keyword>
<keyword id="KW-1185">Reference proteome</keyword>
<protein>
    <recommendedName>
        <fullName>Ras association domain-containing protein 10</fullName>
    </recommendedName>
</protein>
<accession>Q8BL43</accession>
<accession>Q05AF4</accession>
<accession>Q8C0D3</accession>
<accession>Q8K340</accession>
<sequence>MDPSEKKISVWICQEEKLVSGLSRRTTCSDVVRVLLEDGCRRRCRQRRGQRRGLTEDPSGQLELPEPPDENDEDDDDAMPPGMLCGPPQCYCIVEKWRGFERILPNKTRILRLWTAWGDEQENVRFVLVRSEASLPNAGPRSAEARVVLSRERPCLARGAPARPSLALTQEKQRRVVRKAFRKLAKLNRRRQQQPSSPCSSTSSSTASSCSSSARTHESASVERMETLVHLVLSQDHTIRQQVQRLRELDREIDRYEAKVHLDRMRRHGVNYVQDTYLVGAGIDLDGQTPEGEPEDATLEEKGTEPAAPLDSEAQAAALEELARRCDDLVRLQEERAQQEELLERLSAEIQEELNQRWMQRRNEELAAREESLEPDGGPDGELLLEQERVRTQLSTSLYIGLRLSTDLEAVKADLDYSQQQRDIKERELQGLLQSLHTFEQTVVHDGALGSSGPSREPQPQTCAEMWVDQARGLAKSCPGNDEDSDTGLSSMHSQDSDSVPPVCESLV</sequence>
<name>RASFA_MOUSE</name>
<dbReference type="EMBL" id="AK031660">
    <property type="protein sequence ID" value="BAC27498.1"/>
    <property type="status" value="ALT_FRAME"/>
    <property type="molecule type" value="mRNA"/>
</dbReference>
<dbReference type="EMBL" id="AK046433">
    <property type="protein sequence ID" value="BAC32726.1"/>
    <property type="status" value="ALT_INIT"/>
    <property type="molecule type" value="mRNA"/>
</dbReference>
<dbReference type="EMBL" id="BC028854">
    <property type="protein sequence ID" value="AAH28854.1"/>
    <property type="status" value="ALT_SEQ"/>
    <property type="molecule type" value="mRNA"/>
</dbReference>
<dbReference type="EMBL" id="BC125291">
    <property type="protein sequence ID" value="AAI25292.1"/>
    <property type="molecule type" value="mRNA"/>
</dbReference>
<dbReference type="EMBL" id="BC125293">
    <property type="protein sequence ID" value="AAI25294.1"/>
    <property type="molecule type" value="mRNA"/>
</dbReference>
<dbReference type="CCDS" id="CCDS59737.1"/>
<dbReference type="RefSeq" id="NP_780488.2">
    <property type="nucleotide sequence ID" value="NM_175279.3"/>
</dbReference>
<dbReference type="SMR" id="Q8BL43"/>
<dbReference type="BioGRID" id="219609">
    <property type="interactions" value="1"/>
</dbReference>
<dbReference type="FunCoup" id="Q8BL43">
    <property type="interactions" value="23"/>
</dbReference>
<dbReference type="STRING" id="10090.ENSMUSP00000138103"/>
<dbReference type="iPTMnet" id="Q8BL43"/>
<dbReference type="PhosphoSitePlus" id="Q8BL43"/>
<dbReference type="PaxDb" id="10090-ENSMUSP00000138103"/>
<dbReference type="ProteomicsDB" id="300239"/>
<dbReference type="Antibodypedia" id="74573">
    <property type="antibodies" value="75 antibodies from 20 providers"/>
</dbReference>
<dbReference type="DNASU" id="78748"/>
<dbReference type="Ensembl" id="ENSMUST00000182858.2">
    <property type="protein sequence ID" value="ENSMUSP00000138103.2"/>
    <property type="gene ID" value="ENSMUSG00000098132.2"/>
</dbReference>
<dbReference type="GeneID" id="78748"/>
<dbReference type="KEGG" id="mmu:78748"/>
<dbReference type="UCSC" id="uc009jhb.1">
    <property type="organism name" value="mouse"/>
</dbReference>
<dbReference type="AGR" id="MGI:1925998"/>
<dbReference type="CTD" id="644943"/>
<dbReference type="MGI" id="MGI:1925998">
    <property type="gene designation" value="Rassf10"/>
</dbReference>
<dbReference type="VEuPathDB" id="HostDB:ENSMUSG00000098132"/>
<dbReference type="eggNOG" id="KOG1574">
    <property type="taxonomic scope" value="Eukaryota"/>
</dbReference>
<dbReference type="GeneTree" id="ENSGT00950000182839"/>
<dbReference type="HOGENOM" id="CLU_036954_0_0_1"/>
<dbReference type="InParanoid" id="Q8BL43"/>
<dbReference type="OMA" id="KADLDYS"/>
<dbReference type="OrthoDB" id="10034447at2759"/>
<dbReference type="PhylomeDB" id="Q8BL43"/>
<dbReference type="BioGRID-ORCS" id="78748">
    <property type="hits" value="2 hits in 73 CRISPR screens"/>
</dbReference>
<dbReference type="PRO" id="PR:Q8BL43"/>
<dbReference type="Proteomes" id="UP000000589">
    <property type="component" value="Chromosome 7"/>
</dbReference>
<dbReference type="RNAct" id="Q8BL43">
    <property type="molecule type" value="protein"/>
</dbReference>
<dbReference type="Bgee" id="ENSMUSG00000098132">
    <property type="expression patterns" value="Expressed in indifferent gonad and 127 other cell types or tissues"/>
</dbReference>
<dbReference type="GO" id="GO:0005813">
    <property type="term" value="C:centrosome"/>
    <property type="evidence" value="ECO:0007669"/>
    <property type="project" value="UniProtKB-SubCell"/>
</dbReference>
<dbReference type="GO" id="GO:0005829">
    <property type="term" value="C:cytosol"/>
    <property type="evidence" value="ECO:0007669"/>
    <property type="project" value="UniProtKB-SubCell"/>
</dbReference>
<dbReference type="GO" id="GO:0000922">
    <property type="term" value="C:spindle pole"/>
    <property type="evidence" value="ECO:0007669"/>
    <property type="project" value="UniProtKB-SubCell"/>
</dbReference>
<dbReference type="GO" id="GO:0007399">
    <property type="term" value="P:nervous system development"/>
    <property type="evidence" value="ECO:0007669"/>
    <property type="project" value="UniProtKB-KW"/>
</dbReference>
<dbReference type="GO" id="GO:2000179">
    <property type="term" value="P:positive regulation of neural precursor cell proliferation"/>
    <property type="evidence" value="ECO:0000315"/>
    <property type="project" value="UniProtKB"/>
</dbReference>
<dbReference type="GO" id="GO:0050769">
    <property type="term" value="P:positive regulation of neurogenesis"/>
    <property type="evidence" value="ECO:0000315"/>
    <property type="project" value="UniProtKB"/>
</dbReference>
<dbReference type="GO" id="GO:0007165">
    <property type="term" value="P:signal transduction"/>
    <property type="evidence" value="ECO:0007669"/>
    <property type="project" value="InterPro"/>
</dbReference>
<dbReference type="CDD" id="cd16132">
    <property type="entry name" value="RA_RASSF10"/>
    <property type="match status" value="1"/>
</dbReference>
<dbReference type="Gene3D" id="3.10.20.90">
    <property type="entry name" value="Phosphatidylinositol 3-kinase Catalytic Subunit, Chain A, domain 1"/>
    <property type="match status" value="1"/>
</dbReference>
<dbReference type="InterPro" id="IPR033593">
    <property type="entry name" value="N-RASSF"/>
</dbReference>
<dbReference type="InterPro" id="IPR000159">
    <property type="entry name" value="RA_dom"/>
</dbReference>
<dbReference type="InterPro" id="IPR033634">
    <property type="entry name" value="RASSF10_RA"/>
</dbReference>
<dbReference type="InterPro" id="IPR048945">
    <property type="entry name" value="RASSF8/10_RA"/>
</dbReference>
<dbReference type="InterPro" id="IPR029071">
    <property type="entry name" value="Ubiquitin-like_domsf"/>
</dbReference>
<dbReference type="PANTHER" id="PTHR15286:SF13">
    <property type="entry name" value="RAS ASSOCIATION DOMAIN-CONTAINING PROTEIN 10"/>
    <property type="match status" value="1"/>
</dbReference>
<dbReference type="PANTHER" id="PTHR15286">
    <property type="entry name" value="RAS-ASSOCIATING DOMAIN CONTAINING PROTEIN"/>
    <property type="match status" value="1"/>
</dbReference>
<dbReference type="Pfam" id="PF21712">
    <property type="entry name" value="RASSF8-10_RA"/>
    <property type="match status" value="1"/>
</dbReference>
<dbReference type="SUPFAM" id="SSF54236">
    <property type="entry name" value="Ubiquitin-like"/>
    <property type="match status" value="1"/>
</dbReference>
<dbReference type="PROSITE" id="PS50200">
    <property type="entry name" value="RA"/>
    <property type="match status" value="1"/>
</dbReference>
<reference key="1">
    <citation type="journal article" date="2005" name="Science">
        <title>The transcriptional landscape of the mammalian genome.</title>
        <authorList>
            <person name="Carninci P."/>
            <person name="Kasukawa T."/>
            <person name="Katayama S."/>
            <person name="Gough J."/>
            <person name="Frith M.C."/>
            <person name="Maeda N."/>
            <person name="Oyama R."/>
            <person name="Ravasi T."/>
            <person name="Lenhard B."/>
            <person name="Wells C."/>
            <person name="Kodzius R."/>
            <person name="Shimokawa K."/>
            <person name="Bajic V.B."/>
            <person name="Brenner S.E."/>
            <person name="Batalov S."/>
            <person name="Forrest A.R."/>
            <person name="Zavolan M."/>
            <person name="Davis M.J."/>
            <person name="Wilming L.G."/>
            <person name="Aidinis V."/>
            <person name="Allen J.E."/>
            <person name="Ambesi-Impiombato A."/>
            <person name="Apweiler R."/>
            <person name="Aturaliya R.N."/>
            <person name="Bailey T.L."/>
            <person name="Bansal M."/>
            <person name="Baxter L."/>
            <person name="Beisel K.W."/>
            <person name="Bersano T."/>
            <person name="Bono H."/>
            <person name="Chalk A.M."/>
            <person name="Chiu K.P."/>
            <person name="Choudhary V."/>
            <person name="Christoffels A."/>
            <person name="Clutterbuck D.R."/>
            <person name="Crowe M.L."/>
            <person name="Dalla E."/>
            <person name="Dalrymple B.P."/>
            <person name="de Bono B."/>
            <person name="Della Gatta G."/>
            <person name="di Bernardo D."/>
            <person name="Down T."/>
            <person name="Engstrom P."/>
            <person name="Fagiolini M."/>
            <person name="Faulkner G."/>
            <person name="Fletcher C.F."/>
            <person name="Fukushima T."/>
            <person name="Furuno M."/>
            <person name="Futaki S."/>
            <person name="Gariboldi M."/>
            <person name="Georgii-Hemming P."/>
            <person name="Gingeras T.R."/>
            <person name="Gojobori T."/>
            <person name="Green R.E."/>
            <person name="Gustincich S."/>
            <person name="Harbers M."/>
            <person name="Hayashi Y."/>
            <person name="Hensch T.K."/>
            <person name="Hirokawa N."/>
            <person name="Hill D."/>
            <person name="Huminiecki L."/>
            <person name="Iacono M."/>
            <person name="Ikeo K."/>
            <person name="Iwama A."/>
            <person name="Ishikawa T."/>
            <person name="Jakt M."/>
            <person name="Kanapin A."/>
            <person name="Katoh M."/>
            <person name="Kawasawa Y."/>
            <person name="Kelso J."/>
            <person name="Kitamura H."/>
            <person name="Kitano H."/>
            <person name="Kollias G."/>
            <person name="Krishnan S.P."/>
            <person name="Kruger A."/>
            <person name="Kummerfeld S.K."/>
            <person name="Kurochkin I.V."/>
            <person name="Lareau L.F."/>
            <person name="Lazarevic D."/>
            <person name="Lipovich L."/>
            <person name="Liu J."/>
            <person name="Liuni S."/>
            <person name="McWilliam S."/>
            <person name="Madan Babu M."/>
            <person name="Madera M."/>
            <person name="Marchionni L."/>
            <person name="Matsuda H."/>
            <person name="Matsuzawa S."/>
            <person name="Miki H."/>
            <person name="Mignone F."/>
            <person name="Miyake S."/>
            <person name="Morris K."/>
            <person name="Mottagui-Tabar S."/>
            <person name="Mulder N."/>
            <person name="Nakano N."/>
            <person name="Nakauchi H."/>
            <person name="Ng P."/>
            <person name="Nilsson R."/>
            <person name="Nishiguchi S."/>
            <person name="Nishikawa S."/>
            <person name="Nori F."/>
            <person name="Ohara O."/>
            <person name="Okazaki Y."/>
            <person name="Orlando V."/>
            <person name="Pang K.C."/>
            <person name="Pavan W.J."/>
            <person name="Pavesi G."/>
            <person name="Pesole G."/>
            <person name="Petrovsky N."/>
            <person name="Piazza S."/>
            <person name="Reed J."/>
            <person name="Reid J.F."/>
            <person name="Ring B.Z."/>
            <person name="Ringwald M."/>
            <person name="Rost B."/>
            <person name="Ruan Y."/>
            <person name="Salzberg S.L."/>
            <person name="Sandelin A."/>
            <person name="Schneider C."/>
            <person name="Schoenbach C."/>
            <person name="Sekiguchi K."/>
            <person name="Semple C.A."/>
            <person name="Seno S."/>
            <person name="Sessa L."/>
            <person name="Sheng Y."/>
            <person name="Shibata Y."/>
            <person name="Shimada H."/>
            <person name="Shimada K."/>
            <person name="Silva D."/>
            <person name="Sinclair B."/>
            <person name="Sperling S."/>
            <person name="Stupka E."/>
            <person name="Sugiura K."/>
            <person name="Sultana R."/>
            <person name="Takenaka Y."/>
            <person name="Taki K."/>
            <person name="Tammoja K."/>
            <person name="Tan S.L."/>
            <person name="Tang S."/>
            <person name="Taylor M.S."/>
            <person name="Tegner J."/>
            <person name="Teichmann S.A."/>
            <person name="Ueda H.R."/>
            <person name="van Nimwegen E."/>
            <person name="Verardo R."/>
            <person name="Wei C.L."/>
            <person name="Yagi K."/>
            <person name="Yamanishi H."/>
            <person name="Zabarovsky E."/>
            <person name="Zhu S."/>
            <person name="Zimmer A."/>
            <person name="Hide W."/>
            <person name="Bult C."/>
            <person name="Grimmond S.M."/>
            <person name="Teasdale R.D."/>
            <person name="Liu E.T."/>
            <person name="Brusic V."/>
            <person name="Quackenbush J."/>
            <person name="Wahlestedt C."/>
            <person name="Mattick J.S."/>
            <person name="Hume D.A."/>
            <person name="Kai C."/>
            <person name="Sasaki D."/>
            <person name="Tomaru Y."/>
            <person name="Fukuda S."/>
            <person name="Kanamori-Katayama M."/>
            <person name="Suzuki M."/>
            <person name="Aoki J."/>
            <person name="Arakawa T."/>
            <person name="Iida J."/>
            <person name="Imamura K."/>
            <person name="Itoh M."/>
            <person name="Kato T."/>
            <person name="Kawaji H."/>
            <person name="Kawagashira N."/>
            <person name="Kawashima T."/>
            <person name="Kojima M."/>
            <person name="Kondo S."/>
            <person name="Konno H."/>
            <person name="Nakano K."/>
            <person name="Ninomiya N."/>
            <person name="Nishio T."/>
            <person name="Okada M."/>
            <person name="Plessy C."/>
            <person name="Shibata K."/>
            <person name="Shiraki T."/>
            <person name="Suzuki S."/>
            <person name="Tagami M."/>
            <person name="Waki K."/>
            <person name="Watahiki A."/>
            <person name="Okamura-Oho Y."/>
            <person name="Suzuki H."/>
            <person name="Kawai J."/>
            <person name="Hayashizaki Y."/>
        </authorList>
    </citation>
    <scope>NUCLEOTIDE SEQUENCE [LARGE SCALE MRNA]</scope>
    <source>
        <strain>C57BL/6J</strain>
        <tissue>Corpora quadrigemina</tissue>
        <tissue>Testis</tissue>
    </source>
</reference>
<reference key="2">
    <citation type="journal article" date="2004" name="Genome Res.">
        <title>The status, quality, and expansion of the NIH full-length cDNA project: the Mammalian Gene Collection (MGC).</title>
        <authorList>
            <consortium name="The MGC Project Team"/>
        </authorList>
    </citation>
    <scope>NUCLEOTIDE SEQUENCE [LARGE SCALE MRNA]</scope>
    <source>
        <strain>Czech II</strain>
        <tissue>Brain</tissue>
        <tissue>Mammary tumor</tissue>
    </source>
</reference>
<reference key="3">
    <citation type="journal article" date="2018" name="Cell Rep.">
        <title>Nap1l1 controls embryonic neural progenitor cell proliferation and differentiation in the developing brain.</title>
        <authorList>
            <person name="Qiao H."/>
            <person name="Li Y."/>
            <person name="Feng C."/>
            <person name="Duo S."/>
            <person name="Ji F."/>
            <person name="Jiao J."/>
        </authorList>
    </citation>
    <scope>FUNCTION</scope>
    <scope>TISSUE SPECIFICITY</scope>
    <scope>DEVELOPMENTAL STAGE</scope>
</reference>
<proteinExistence type="evidence at protein level"/>